<proteinExistence type="inferred from homology"/>
<feature type="chain" id="PRO_0000267144" description="Enolase 1">
    <location>
        <begin position="1"/>
        <end position="426"/>
    </location>
</feature>
<feature type="active site" description="Proton donor" evidence="1">
    <location>
        <position position="204"/>
    </location>
</feature>
<feature type="active site" description="Proton acceptor" evidence="1">
    <location>
        <position position="336"/>
    </location>
</feature>
<feature type="binding site" evidence="1">
    <location>
        <position position="162"/>
    </location>
    <ligand>
        <name>(2R)-2-phosphoglycerate</name>
        <dbReference type="ChEBI" id="CHEBI:58289"/>
    </ligand>
</feature>
<feature type="binding site" evidence="1">
    <location>
        <position position="241"/>
    </location>
    <ligand>
        <name>Mg(2+)</name>
        <dbReference type="ChEBI" id="CHEBI:18420"/>
    </ligand>
</feature>
<feature type="binding site" evidence="1">
    <location>
        <position position="284"/>
    </location>
    <ligand>
        <name>Mg(2+)</name>
        <dbReference type="ChEBI" id="CHEBI:18420"/>
    </ligand>
</feature>
<feature type="binding site" evidence="1">
    <location>
        <position position="311"/>
    </location>
    <ligand>
        <name>Mg(2+)</name>
        <dbReference type="ChEBI" id="CHEBI:18420"/>
    </ligand>
</feature>
<feature type="binding site" evidence="1">
    <location>
        <position position="336"/>
    </location>
    <ligand>
        <name>(2R)-2-phosphoglycerate</name>
        <dbReference type="ChEBI" id="CHEBI:58289"/>
    </ligand>
</feature>
<feature type="binding site" evidence="1">
    <location>
        <position position="365"/>
    </location>
    <ligand>
        <name>(2R)-2-phosphoglycerate</name>
        <dbReference type="ChEBI" id="CHEBI:58289"/>
    </ligand>
</feature>
<feature type="binding site" evidence="1">
    <location>
        <position position="366"/>
    </location>
    <ligand>
        <name>(2R)-2-phosphoglycerate</name>
        <dbReference type="ChEBI" id="CHEBI:58289"/>
    </ligand>
</feature>
<feature type="binding site" evidence="1">
    <location>
        <position position="387"/>
    </location>
    <ligand>
        <name>(2R)-2-phosphoglycerate</name>
        <dbReference type="ChEBI" id="CHEBI:58289"/>
    </ligand>
</feature>
<gene>
    <name evidence="1" type="primary">eno1</name>
    <name type="ordered locus">Mhun_1018</name>
</gene>
<reference key="1">
    <citation type="journal article" date="2016" name="Stand. Genomic Sci.">
        <title>Complete genome sequence of Methanospirillum hungatei type strain JF1.</title>
        <authorList>
            <person name="Gunsalus R.P."/>
            <person name="Cook L.E."/>
            <person name="Crable B."/>
            <person name="Rohlin L."/>
            <person name="McDonald E."/>
            <person name="Mouttaki H."/>
            <person name="Sieber J.R."/>
            <person name="Poweleit N."/>
            <person name="Zhou H."/>
            <person name="Lapidus A.L."/>
            <person name="Daligault H.E."/>
            <person name="Land M."/>
            <person name="Gilna P."/>
            <person name="Ivanova N."/>
            <person name="Kyrpides N."/>
            <person name="Culley D.E."/>
            <person name="McInerney M.J."/>
        </authorList>
    </citation>
    <scope>NUCLEOTIDE SEQUENCE [LARGE SCALE GENOMIC DNA]</scope>
    <source>
        <strain>ATCC 27890 / DSM 864 / NBRC 100397 / JF-1</strain>
    </source>
</reference>
<comment type="function">
    <text evidence="1">Catalyzes the reversible conversion of 2-phosphoglycerate (2-PG) into phosphoenolpyruvate (PEP). It is essential for the degradation of carbohydrates via glycolysis.</text>
</comment>
<comment type="catalytic activity">
    <reaction evidence="1">
        <text>(2R)-2-phosphoglycerate = phosphoenolpyruvate + H2O</text>
        <dbReference type="Rhea" id="RHEA:10164"/>
        <dbReference type="ChEBI" id="CHEBI:15377"/>
        <dbReference type="ChEBI" id="CHEBI:58289"/>
        <dbReference type="ChEBI" id="CHEBI:58702"/>
        <dbReference type="EC" id="4.2.1.11"/>
    </reaction>
</comment>
<comment type="cofactor">
    <cofactor evidence="1">
        <name>Mg(2+)</name>
        <dbReference type="ChEBI" id="CHEBI:18420"/>
    </cofactor>
    <text evidence="1">Binds a second Mg(2+) ion via substrate during catalysis.</text>
</comment>
<comment type="pathway">
    <text evidence="1">Carbohydrate degradation; glycolysis; pyruvate from D-glyceraldehyde 3-phosphate: step 4/5.</text>
</comment>
<comment type="subcellular location">
    <subcellularLocation>
        <location evidence="1">Cytoplasm</location>
    </subcellularLocation>
    <subcellularLocation>
        <location evidence="1">Secreted</location>
    </subcellularLocation>
    <subcellularLocation>
        <location evidence="1">Cell surface</location>
    </subcellularLocation>
    <text evidence="1">Fractions of enolase are present in both the cytoplasm and on the cell surface.</text>
</comment>
<comment type="similarity">
    <text evidence="1">Belongs to the enolase family.</text>
</comment>
<protein>
    <recommendedName>
        <fullName evidence="1">Enolase 1</fullName>
        <ecNumber evidence="1">4.2.1.11</ecNumber>
    </recommendedName>
    <alternativeName>
        <fullName evidence="1">2-phospho-D-glycerate hydro-lyase 1</fullName>
    </alternativeName>
    <alternativeName>
        <fullName evidence="1">2-phosphoglycerate dehydratase 1</fullName>
    </alternativeName>
</protein>
<sequence length="426" mass="46158">MVQIEKVFGREIIDSRGNPAVEVDITLVGGYFGRAACPSGASTGTHEAIEKRDGDFRFFGKGVKKAVEAINTDIRKSLLGMDSTDQPAVDNQLISLDGTDNKGHLGANAILPVSMAVARAASQALQVPLYEHLADRTYLLPVPYMNILNGGAHANWQGADFQEYMIAPVGAPDFPEAVRWGCEVYHTLKAILKKRGLSTGVGDEGGFAPKVSSNRAPLDFITEAIEMAGYKPGKDISLALDPASSEFYSDGVYELKSEGKKLSSEEMTGYYEDMVAVYPIISIEDGLSEDDWNGWIAMTKAIGKKVQLVGDDIFVTNTKRISRGISEKAANAVLIKLNQIGTVTETISAVTMARNAGWSSMISHRSGETVDSFIADLTVSLGTGQIKTGAPCRGERVEKYNQLMRIHEELGSRATYAGKKREIRHL</sequence>
<evidence type="ECO:0000255" key="1">
    <source>
        <dbReference type="HAMAP-Rule" id="MF_00318"/>
    </source>
</evidence>
<name>ENO1_METHJ</name>
<keyword id="KW-0963">Cytoplasm</keyword>
<keyword id="KW-0324">Glycolysis</keyword>
<keyword id="KW-0456">Lyase</keyword>
<keyword id="KW-0460">Magnesium</keyword>
<keyword id="KW-0479">Metal-binding</keyword>
<keyword id="KW-1185">Reference proteome</keyword>
<keyword id="KW-0964">Secreted</keyword>
<dbReference type="EC" id="4.2.1.11" evidence="1"/>
<dbReference type="EMBL" id="CP000254">
    <property type="protein sequence ID" value="ABD40768.1"/>
    <property type="molecule type" value="Genomic_DNA"/>
</dbReference>
<dbReference type="RefSeq" id="WP_011448047.1">
    <property type="nucleotide sequence ID" value="NC_007796.1"/>
</dbReference>
<dbReference type="SMR" id="Q2FQL9"/>
<dbReference type="FunCoup" id="Q2FQL9">
    <property type="interactions" value="187"/>
</dbReference>
<dbReference type="STRING" id="323259.Mhun_1018"/>
<dbReference type="EnsemblBacteria" id="ABD40768">
    <property type="protein sequence ID" value="ABD40768"/>
    <property type="gene ID" value="Mhun_1018"/>
</dbReference>
<dbReference type="GeneID" id="3924786"/>
<dbReference type="KEGG" id="mhu:Mhun_1018"/>
<dbReference type="eggNOG" id="arCOG01169">
    <property type="taxonomic scope" value="Archaea"/>
</dbReference>
<dbReference type="HOGENOM" id="CLU_031223_2_1_2"/>
<dbReference type="InParanoid" id="Q2FQL9"/>
<dbReference type="OrthoDB" id="8680at2157"/>
<dbReference type="UniPathway" id="UPA00109">
    <property type="reaction ID" value="UER00187"/>
</dbReference>
<dbReference type="Proteomes" id="UP000001941">
    <property type="component" value="Chromosome"/>
</dbReference>
<dbReference type="GO" id="GO:0009986">
    <property type="term" value="C:cell surface"/>
    <property type="evidence" value="ECO:0007669"/>
    <property type="project" value="UniProtKB-SubCell"/>
</dbReference>
<dbReference type="GO" id="GO:0005576">
    <property type="term" value="C:extracellular region"/>
    <property type="evidence" value="ECO:0007669"/>
    <property type="project" value="UniProtKB-SubCell"/>
</dbReference>
<dbReference type="GO" id="GO:0000015">
    <property type="term" value="C:phosphopyruvate hydratase complex"/>
    <property type="evidence" value="ECO:0007669"/>
    <property type="project" value="InterPro"/>
</dbReference>
<dbReference type="GO" id="GO:0000287">
    <property type="term" value="F:magnesium ion binding"/>
    <property type="evidence" value="ECO:0007669"/>
    <property type="project" value="UniProtKB-UniRule"/>
</dbReference>
<dbReference type="GO" id="GO:0004634">
    <property type="term" value="F:phosphopyruvate hydratase activity"/>
    <property type="evidence" value="ECO:0007669"/>
    <property type="project" value="UniProtKB-UniRule"/>
</dbReference>
<dbReference type="GO" id="GO:0006096">
    <property type="term" value="P:glycolytic process"/>
    <property type="evidence" value="ECO:0007669"/>
    <property type="project" value="UniProtKB-UniRule"/>
</dbReference>
<dbReference type="CDD" id="cd03313">
    <property type="entry name" value="enolase"/>
    <property type="match status" value="1"/>
</dbReference>
<dbReference type="Gene3D" id="3.20.20.120">
    <property type="entry name" value="Enolase-like C-terminal domain"/>
    <property type="match status" value="1"/>
</dbReference>
<dbReference type="Gene3D" id="3.30.390.10">
    <property type="entry name" value="Enolase-like, N-terminal domain"/>
    <property type="match status" value="1"/>
</dbReference>
<dbReference type="HAMAP" id="MF_00318">
    <property type="entry name" value="Enolase"/>
    <property type="match status" value="1"/>
</dbReference>
<dbReference type="InterPro" id="IPR000941">
    <property type="entry name" value="Enolase"/>
</dbReference>
<dbReference type="InterPro" id="IPR036849">
    <property type="entry name" value="Enolase-like_C_sf"/>
</dbReference>
<dbReference type="InterPro" id="IPR029017">
    <property type="entry name" value="Enolase-like_N"/>
</dbReference>
<dbReference type="InterPro" id="IPR020810">
    <property type="entry name" value="Enolase_C"/>
</dbReference>
<dbReference type="InterPro" id="IPR020809">
    <property type="entry name" value="Enolase_CS"/>
</dbReference>
<dbReference type="InterPro" id="IPR020811">
    <property type="entry name" value="Enolase_N"/>
</dbReference>
<dbReference type="NCBIfam" id="TIGR01060">
    <property type="entry name" value="eno"/>
    <property type="match status" value="1"/>
</dbReference>
<dbReference type="PANTHER" id="PTHR11902">
    <property type="entry name" value="ENOLASE"/>
    <property type="match status" value="1"/>
</dbReference>
<dbReference type="PANTHER" id="PTHR11902:SF1">
    <property type="entry name" value="ENOLASE"/>
    <property type="match status" value="1"/>
</dbReference>
<dbReference type="Pfam" id="PF00113">
    <property type="entry name" value="Enolase_C"/>
    <property type="match status" value="1"/>
</dbReference>
<dbReference type="Pfam" id="PF03952">
    <property type="entry name" value="Enolase_N"/>
    <property type="match status" value="1"/>
</dbReference>
<dbReference type="PIRSF" id="PIRSF001400">
    <property type="entry name" value="Enolase"/>
    <property type="match status" value="1"/>
</dbReference>
<dbReference type="PRINTS" id="PR00148">
    <property type="entry name" value="ENOLASE"/>
</dbReference>
<dbReference type="SFLD" id="SFLDS00001">
    <property type="entry name" value="Enolase"/>
    <property type="match status" value="1"/>
</dbReference>
<dbReference type="SFLD" id="SFLDF00002">
    <property type="entry name" value="enolase"/>
    <property type="match status" value="1"/>
</dbReference>
<dbReference type="SMART" id="SM01192">
    <property type="entry name" value="Enolase_C"/>
    <property type="match status" value="1"/>
</dbReference>
<dbReference type="SMART" id="SM01193">
    <property type="entry name" value="Enolase_N"/>
    <property type="match status" value="1"/>
</dbReference>
<dbReference type="SUPFAM" id="SSF51604">
    <property type="entry name" value="Enolase C-terminal domain-like"/>
    <property type="match status" value="1"/>
</dbReference>
<dbReference type="SUPFAM" id="SSF54826">
    <property type="entry name" value="Enolase N-terminal domain-like"/>
    <property type="match status" value="1"/>
</dbReference>
<dbReference type="PROSITE" id="PS00164">
    <property type="entry name" value="ENOLASE"/>
    <property type="match status" value="1"/>
</dbReference>
<organism>
    <name type="scientific">Methanospirillum hungatei JF-1 (strain ATCC 27890 / DSM 864 / NBRC 100397 / JF-1)</name>
    <dbReference type="NCBI Taxonomy" id="323259"/>
    <lineage>
        <taxon>Archaea</taxon>
        <taxon>Methanobacteriati</taxon>
        <taxon>Methanobacteriota</taxon>
        <taxon>Stenosarchaea group</taxon>
        <taxon>Methanomicrobia</taxon>
        <taxon>Methanomicrobiales</taxon>
        <taxon>Methanospirillaceae</taxon>
        <taxon>Methanospirillum</taxon>
    </lineage>
</organism>
<accession>Q2FQL9</accession>